<name>FABA_NITHX</name>
<organism>
    <name type="scientific">Nitrobacter hamburgensis (strain DSM 10229 / NCIMB 13809 / X14)</name>
    <dbReference type="NCBI Taxonomy" id="323097"/>
    <lineage>
        <taxon>Bacteria</taxon>
        <taxon>Pseudomonadati</taxon>
        <taxon>Pseudomonadota</taxon>
        <taxon>Alphaproteobacteria</taxon>
        <taxon>Hyphomicrobiales</taxon>
        <taxon>Nitrobacteraceae</taxon>
        <taxon>Nitrobacter</taxon>
    </lineage>
</organism>
<gene>
    <name evidence="1" type="primary">fabA</name>
    <name type="ordered locus">Nham_0042</name>
</gene>
<reference key="1">
    <citation type="submission" date="2006-03" db="EMBL/GenBank/DDBJ databases">
        <title>Complete sequence of chromosome of Nitrobacter hamburgensis X14.</title>
        <authorList>
            <consortium name="US DOE Joint Genome Institute"/>
            <person name="Copeland A."/>
            <person name="Lucas S."/>
            <person name="Lapidus A."/>
            <person name="Barry K."/>
            <person name="Detter J.C."/>
            <person name="Glavina del Rio T."/>
            <person name="Hammon N."/>
            <person name="Israni S."/>
            <person name="Dalin E."/>
            <person name="Tice H."/>
            <person name="Pitluck S."/>
            <person name="Chain P."/>
            <person name="Malfatti S."/>
            <person name="Shin M."/>
            <person name="Vergez L."/>
            <person name="Schmutz J."/>
            <person name="Larimer F."/>
            <person name="Land M."/>
            <person name="Hauser L."/>
            <person name="Kyrpides N."/>
            <person name="Ivanova N."/>
            <person name="Ward B."/>
            <person name="Arp D."/>
            <person name="Klotz M."/>
            <person name="Stein L."/>
            <person name="O'Mullan G."/>
            <person name="Starkenburg S."/>
            <person name="Sayavedra L."/>
            <person name="Poret-Peterson A.T."/>
            <person name="Gentry M.E."/>
            <person name="Bruce D."/>
            <person name="Richardson P."/>
        </authorList>
    </citation>
    <scope>NUCLEOTIDE SEQUENCE [LARGE SCALE GENOMIC DNA]</scope>
    <source>
        <strain>DSM 10229 / NCIMB 13809 / X14</strain>
    </source>
</reference>
<comment type="function">
    <text evidence="1">Necessary for the introduction of cis unsaturation into fatty acids. Catalyzes the dehydration of (3R)-3-hydroxydecanoyl-ACP to E-(2)-decenoyl-ACP and then its isomerization to Z-(3)-decenoyl-ACP. Can catalyze the dehydratase reaction for beta-hydroxyacyl-ACPs with saturated chain lengths up to 16:0, being most active on intermediate chain length.</text>
</comment>
<comment type="catalytic activity">
    <reaction evidence="1">
        <text>a (3R)-hydroxyacyl-[ACP] = a (2E)-enoyl-[ACP] + H2O</text>
        <dbReference type="Rhea" id="RHEA:13097"/>
        <dbReference type="Rhea" id="RHEA-COMP:9925"/>
        <dbReference type="Rhea" id="RHEA-COMP:9945"/>
        <dbReference type="ChEBI" id="CHEBI:15377"/>
        <dbReference type="ChEBI" id="CHEBI:78784"/>
        <dbReference type="ChEBI" id="CHEBI:78827"/>
        <dbReference type="EC" id="4.2.1.59"/>
    </reaction>
</comment>
<comment type="catalytic activity">
    <reaction evidence="1">
        <text>(3R)-hydroxydecanoyl-[ACP] = (2E)-decenoyl-[ACP] + H2O</text>
        <dbReference type="Rhea" id="RHEA:41860"/>
        <dbReference type="Rhea" id="RHEA-COMP:9638"/>
        <dbReference type="Rhea" id="RHEA-COMP:9639"/>
        <dbReference type="ChEBI" id="CHEBI:15377"/>
        <dbReference type="ChEBI" id="CHEBI:78466"/>
        <dbReference type="ChEBI" id="CHEBI:78467"/>
    </reaction>
</comment>
<comment type="catalytic activity">
    <reaction evidence="1">
        <text>(2E)-decenoyl-[ACP] = (3Z)-decenoyl-[ACP]</text>
        <dbReference type="Rhea" id="RHEA:23568"/>
        <dbReference type="Rhea" id="RHEA-COMP:9639"/>
        <dbReference type="Rhea" id="RHEA-COMP:9927"/>
        <dbReference type="ChEBI" id="CHEBI:78467"/>
        <dbReference type="ChEBI" id="CHEBI:78798"/>
        <dbReference type="EC" id="5.3.3.14"/>
    </reaction>
</comment>
<comment type="pathway">
    <text evidence="1">Lipid metabolism; fatty acid biosynthesis.</text>
</comment>
<comment type="subunit">
    <text evidence="1">Homodimer.</text>
</comment>
<comment type="subcellular location">
    <subcellularLocation>
        <location evidence="1">Cytoplasm</location>
    </subcellularLocation>
</comment>
<comment type="similarity">
    <text evidence="1">Belongs to the thioester dehydratase family. FabA subfamily.</text>
</comment>
<dbReference type="EC" id="4.2.1.59" evidence="1"/>
<dbReference type="EC" id="5.3.3.14" evidence="1"/>
<dbReference type="EMBL" id="CP000319">
    <property type="protein sequence ID" value="ABE60943.1"/>
    <property type="molecule type" value="Genomic_DNA"/>
</dbReference>
<dbReference type="RefSeq" id="WP_011508650.1">
    <property type="nucleotide sequence ID" value="NC_007964.1"/>
</dbReference>
<dbReference type="SMR" id="Q1QS54"/>
<dbReference type="STRING" id="323097.Nham_0042"/>
<dbReference type="KEGG" id="nha:Nham_0042"/>
<dbReference type="eggNOG" id="COG0764">
    <property type="taxonomic scope" value="Bacteria"/>
</dbReference>
<dbReference type="HOGENOM" id="CLU_097925_0_0_5"/>
<dbReference type="OrthoDB" id="9786735at2"/>
<dbReference type="UniPathway" id="UPA00094"/>
<dbReference type="Proteomes" id="UP000001953">
    <property type="component" value="Chromosome"/>
</dbReference>
<dbReference type="GO" id="GO:0005737">
    <property type="term" value="C:cytoplasm"/>
    <property type="evidence" value="ECO:0007669"/>
    <property type="project" value="UniProtKB-SubCell"/>
</dbReference>
<dbReference type="GO" id="GO:0019171">
    <property type="term" value="F:(3R)-hydroxyacyl-[acyl-carrier-protein] dehydratase activity"/>
    <property type="evidence" value="ECO:0007669"/>
    <property type="project" value="UniProtKB-UniRule"/>
</dbReference>
<dbReference type="GO" id="GO:0034017">
    <property type="term" value="F:trans-2-decenoyl-acyl-carrier-protein isomerase activity"/>
    <property type="evidence" value="ECO:0007669"/>
    <property type="project" value="UniProtKB-UniRule"/>
</dbReference>
<dbReference type="GO" id="GO:0006636">
    <property type="term" value="P:unsaturated fatty acid biosynthetic process"/>
    <property type="evidence" value="ECO:0007669"/>
    <property type="project" value="UniProtKB-UniRule"/>
</dbReference>
<dbReference type="CDD" id="cd01287">
    <property type="entry name" value="FabA"/>
    <property type="match status" value="1"/>
</dbReference>
<dbReference type="Gene3D" id="3.10.129.10">
    <property type="entry name" value="Hotdog Thioesterase"/>
    <property type="match status" value="1"/>
</dbReference>
<dbReference type="HAMAP" id="MF_00405">
    <property type="entry name" value="FabA"/>
    <property type="match status" value="1"/>
</dbReference>
<dbReference type="InterPro" id="IPR010083">
    <property type="entry name" value="FabA"/>
</dbReference>
<dbReference type="InterPro" id="IPR013114">
    <property type="entry name" value="FabA_FabZ"/>
</dbReference>
<dbReference type="InterPro" id="IPR029069">
    <property type="entry name" value="HotDog_dom_sf"/>
</dbReference>
<dbReference type="NCBIfam" id="TIGR01749">
    <property type="entry name" value="fabA"/>
    <property type="match status" value="1"/>
</dbReference>
<dbReference type="NCBIfam" id="NF003509">
    <property type="entry name" value="PRK05174.1"/>
    <property type="match status" value="1"/>
</dbReference>
<dbReference type="PANTHER" id="PTHR30272">
    <property type="entry name" value="3-HYDROXYACYL-[ACYL-CARRIER-PROTEIN] DEHYDRATASE"/>
    <property type="match status" value="1"/>
</dbReference>
<dbReference type="PANTHER" id="PTHR30272:SF8">
    <property type="entry name" value="3-HYDROXYDECANOYL-[ACYL-CARRIER-PROTEIN] DEHYDRATASE"/>
    <property type="match status" value="1"/>
</dbReference>
<dbReference type="Pfam" id="PF07977">
    <property type="entry name" value="FabA"/>
    <property type="match status" value="1"/>
</dbReference>
<dbReference type="SUPFAM" id="SSF54637">
    <property type="entry name" value="Thioesterase/thiol ester dehydrase-isomerase"/>
    <property type="match status" value="1"/>
</dbReference>
<keyword id="KW-0963">Cytoplasm</keyword>
<keyword id="KW-0275">Fatty acid biosynthesis</keyword>
<keyword id="KW-0276">Fatty acid metabolism</keyword>
<keyword id="KW-0413">Isomerase</keyword>
<keyword id="KW-0444">Lipid biosynthesis</keyword>
<keyword id="KW-0443">Lipid metabolism</keyword>
<keyword id="KW-0456">Lyase</keyword>
<keyword id="KW-1185">Reference proteome</keyword>
<feature type="chain" id="PRO_0000267736" description="3-hydroxydecanoyl-[acyl-carrier-protein] dehydratase">
    <location>
        <begin position="1"/>
        <end position="174"/>
    </location>
</feature>
<feature type="active site" evidence="1">
    <location>
        <position position="71"/>
    </location>
</feature>
<proteinExistence type="inferred from homology"/>
<evidence type="ECO:0000255" key="1">
    <source>
        <dbReference type="HAMAP-Rule" id="MF_00405"/>
    </source>
</evidence>
<accession>Q1QS54</accession>
<sequence length="174" mass="19130">MQDRRSSYDYEGLLACGRGELFGPGNAQLPLPPMLMFDRITEITEDGGEFGKGLIRAELDVKSDLWFFGCHFKGDPVMPGCLGLDALWQMVGFYLGWTGGEGRGRALGLGDLKFSGQVLPHVRKVVYNVDIKRVMRSKLVLGIADGWLSTDGDIIYRAKDLKVGLFKQDAAPGT</sequence>
<protein>
    <recommendedName>
        <fullName evidence="1">3-hydroxydecanoyl-[acyl-carrier-protein] dehydratase</fullName>
        <ecNumber evidence="1">4.2.1.59</ecNumber>
    </recommendedName>
    <alternativeName>
        <fullName evidence="1">3-hydroxyacyl-[acyl-carrier-protein] dehydratase FabA</fullName>
    </alternativeName>
    <alternativeName>
        <fullName evidence="1">Beta-hydroxydecanoyl thioester dehydrase</fullName>
    </alternativeName>
    <alternativeName>
        <fullName evidence="1">Trans-2-decenoyl-[acyl-carrier-protein] isomerase</fullName>
        <ecNumber evidence="1">5.3.3.14</ecNumber>
    </alternativeName>
</protein>